<evidence type="ECO:0000255" key="1">
    <source>
        <dbReference type="HAMAP-Rule" id="MF_01030"/>
    </source>
</evidence>
<comment type="catalytic activity">
    <reaction evidence="1">
        <text>D-serine = pyruvate + NH4(+)</text>
        <dbReference type="Rhea" id="RHEA:13977"/>
        <dbReference type="ChEBI" id="CHEBI:15361"/>
        <dbReference type="ChEBI" id="CHEBI:28938"/>
        <dbReference type="ChEBI" id="CHEBI:35247"/>
        <dbReference type="EC" id="4.3.1.18"/>
    </reaction>
</comment>
<comment type="cofactor">
    <cofactor evidence="1">
        <name>pyridoxal 5'-phosphate</name>
        <dbReference type="ChEBI" id="CHEBI:597326"/>
    </cofactor>
</comment>
<comment type="similarity">
    <text evidence="1">Belongs to the serine/threonine dehydratase family. DsdA subfamily.</text>
</comment>
<feature type="chain" id="PRO_1000063717" description="Probable D-serine dehydratase">
    <location>
        <begin position="1"/>
        <end position="443"/>
    </location>
</feature>
<feature type="modified residue" description="N6-(pyridoxal phosphate)lysine" evidence="1">
    <location>
        <position position="118"/>
    </location>
</feature>
<organism>
    <name type="scientific">Vibrio campbellii (strain ATCC BAA-1116)</name>
    <dbReference type="NCBI Taxonomy" id="2902295"/>
    <lineage>
        <taxon>Bacteria</taxon>
        <taxon>Pseudomonadati</taxon>
        <taxon>Pseudomonadota</taxon>
        <taxon>Gammaproteobacteria</taxon>
        <taxon>Vibrionales</taxon>
        <taxon>Vibrionaceae</taxon>
        <taxon>Vibrio</taxon>
    </lineage>
</organism>
<name>SDHD_VIBC1</name>
<accession>A7MYG2</accession>
<proteinExistence type="inferred from homology"/>
<keyword id="KW-0456">Lyase</keyword>
<keyword id="KW-0663">Pyridoxal phosphate</keyword>
<sequence>MTTHNICALITEFPLVKRLIDLEEVVWFNPNITTLEEGLPYVGLGAANIKDASERLKRFAPYLMKAFPETAASNGIIESNVVEIDKMKSCLEAQYGTQILGRLMLKKDSHLPISGSIKARGGIYEVLTHAERLAIEAGLLNESDDYSKLFSEEFRQFFQQYSIAVSSTGNLGMSIGIMSAKLGFSVSVHMSSDAREWKKNKLRSHGVNVVEYEQDYGVAVEQGRKEAEKDPTCFFIDDENSQTLFLGYSVAGERLKQQFDDMGIIVDAEHPLFVYLPCGVGGGPGGVAFGLKMAFGDHVHCIFAEPTHSPCMLLGVHTGLHDDIAVQDLGIDNITAADGLAVGRASGFVGRAMERLLDGYYTITDERMYHHLGELSEQEDIRLEPSALAGMMGAVHVSQDQAYQARMQFSEDKMNNAIHLVWATGGGMVPEAEMSAYLAKSGR</sequence>
<gene>
    <name evidence="1" type="primary">dsdA</name>
    <name type="ordered locus">VIBHAR_02609</name>
</gene>
<protein>
    <recommendedName>
        <fullName evidence="1">Probable D-serine dehydratase</fullName>
        <ecNumber evidence="1">4.3.1.18</ecNumber>
    </recommendedName>
    <alternativeName>
        <fullName evidence="1">D-serine deaminase</fullName>
        <shortName evidence="1">DSD</shortName>
    </alternativeName>
</protein>
<dbReference type="EC" id="4.3.1.18" evidence="1"/>
<dbReference type="EMBL" id="CP000789">
    <property type="protein sequence ID" value="ABU71570.1"/>
    <property type="molecule type" value="Genomic_DNA"/>
</dbReference>
<dbReference type="RefSeq" id="WP_012128225.1">
    <property type="nucleotide sequence ID" value="NC_009783.1"/>
</dbReference>
<dbReference type="SMR" id="A7MYG2"/>
<dbReference type="KEGG" id="vha:VIBHAR_02609"/>
<dbReference type="PATRIC" id="fig|338187.25.peg.98"/>
<dbReference type="Proteomes" id="UP000008152">
    <property type="component" value="Chromosome I"/>
</dbReference>
<dbReference type="GO" id="GO:0008721">
    <property type="term" value="F:D-serine ammonia-lyase activity"/>
    <property type="evidence" value="ECO:0007669"/>
    <property type="project" value="UniProtKB-EC"/>
</dbReference>
<dbReference type="GO" id="GO:0016836">
    <property type="term" value="F:hydro-lyase activity"/>
    <property type="evidence" value="ECO:0007669"/>
    <property type="project" value="UniProtKB-UniRule"/>
</dbReference>
<dbReference type="GO" id="GO:0030170">
    <property type="term" value="F:pyridoxal phosphate binding"/>
    <property type="evidence" value="ECO:0007669"/>
    <property type="project" value="InterPro"/>
</dbReference>
<dbReference type="GO" id="GO:0036088">
    <property type="term" value="P:D-serine catabolic process"/>
    <property type="evidence" value="ECO:0007669"/>
    <property type="project" value="TreeGrafter"/>
</dbReference>
<dbReference type="GO" id="GO:0009097">
    <property type="term" value="P:isoleucine biosynthetic process"/>
    <property type="evidence" value="ECO:0007669"/>
    <property type="project" value="TreeGrafter"/>
</dbReference>
<dbReference type="CDD" id="cd06447">
    <property type="entry name" value="D-Ser-dehyd"/>
    <property type="match status" value="1"/>
</dbReference>
<dbReference type="FunFam" id="3.40.50.1100:FF:000018">
    <property type="entry name" value="D-serine dehydratase"/>
    <property type="match status" value="1"/>
</dbReference>
<dbReference type="Gene3D" id="3.40.50.1100">
    <property type="match status" value="2"/>
</dbReference>
<dbReference type="HAMAP" id="MF_01030">
    <property type="entry name" value="D_Ser_dehydrat"/>
    <property type="match status" value="1"/>
</dbReference>
<dbReference type="InterPro" id="IPR011780">
    <property type="entry name" value="D_Ser_am_lyase"/>
</dbReference>
<dbReference type="InterPro" id="IPR050147">
    <property type="entry name" value="Ser/Thr_Dehydratase"/>
</dbReference>
<dbReference type="InterPro" id="IPR000634">
    <property type="entry name" value="Ser/Thr_deHydtase_PyrdxlP-BS"/>
</dbReference>
<dbReference type="InterPro" id="IPR001926">
    <property type="entry name" value="TrpB-like_PALP"/>
</dbReference>
<dbReference type="InterPro" id="IPR036052">
    <property type="entry name" value="TrpB-like_PALP_sf"/>
</dbReference>
<dbReference type="NCBIfam" id="TIGR02035">
    <property type="entry name" value="D_Ser_am_lyase"/>
    <property type="match status" value="1"/>
</dbReference>
<dbReference type="NCBIfam" id="NF002823">
    <property type="entry name" value="PRK02991.1"/>
    <property type="match status" value="1"/>
</dbReference>
<dbReference type="PANTHER" id="PTHR48078:SF9">
    <property type="entry name" value="D-SERINE DEHYDRATASE"/>
    <property type="match status" value="1"/>
</dbReference>
<dbReference type="PANTHER" id="PTHR48078">
    <property type="entry name" value="THREONINE DEHYDRATASE, MITOCHONDRIAL-RELATED"/>
    <property type="match status" value="1"/>
</dbReference>
<dbReference type="Pfam" id="PF00291">
    <property type="entry name" value="PALP"/>
    <property type="match status" value="1"/>
</dbReference>
<dbReference type="SUPFAM" id="SSF53686">
    <property type="entry name" value="Tryptophan synthase beta subunit-like PLP-dependent enzymes"/>
    <property type="match status" value="1"/>
</dbReference>
<dbReference type="PROSITE" id="PS00165">
    <property type="entry name" value="DEHYDRATASE_SER_THR"/>
    <property type="match status" value="1"/>
</dbReference>
<reference key="1">
    <citation type="submission" date="2007-08" db="EMBL/GenBank/DDBJ databases">
        <authorList>
            <consortium name="The Vibrio harveyi Genome Sequencing Project"/>
            <person name="Bassler B."/>
            <person name="Clifton S.W."/>
            <person name="Fulton L."/>
            <person name="Delehaunty K."/>
            <person name="Fronick C."/>
            <person name="Harrison M."/>
            <person name="Markivic C."/>
            <person name="Fulton R."/>
            <person name="Tin-Wollam A.-M."/>
            <person name="Shah N."/>
            <person name="Pepin K."/>
            <person name="Nash W."/>
            <person name="Thiruvilangam P."/>
            <person name="Bhonagiri V."/>
            <person name="Waters C."/>
            <person name="Tu K.C."/>
            <person name="Irgon J."/>
            <person name="Wilson R.K."/>
        </authorList>
    </citation>
    <scope>NUCLEOTIDE SEQUENCE [LARGE SCALE GENOMIC DNA]</scope>
    <source>
        <strain>ATCC BAA-1116 / BB120</strain>
    </source>
</reference>